<proteinExistence type="evidence at protein level"/>
<protein>
    <recommendedName>
        <fullName>Oxytetracycline polyketide synthase acyl carrier protein</fullName>
        <shortName>ACP</shortName>
    </recommendedName>
</protein>
<reference key="1">
    <citation type="journal article" date="1994" name="Gene">
        <title>Sequences of the oxytetracycline polyketide synthase-encoding otc genes from Streptomyces rimosus.</title>
        <authorList>
            <person name="Kim E.S."/>
            <person name="Bibb M.J."/>
            <person name="Butler M.J."/>
            <person name="Hopwood D.A."/>
            <person name="Sherman D.H."/>
        </authorList>
    </citation>
    <scope>NUCLEOTIDE SEQUENCE [GENOMIC DNA]</scope>
</reference>
<reference key="2">
    <citation type="submission" date="1993-11" db="EMBL/GenBank/DDBJ databases">
        <title>The acyl-carrier protein for biosynthesis of oxytetracycline from Streptomyces rimosus: overexpression in Escherichia coli, purification and characterization of the apoprotein.</title>
        <authorList>
            <person name="Linton K.J."/>
            <person name="Hunter I.S."/>
        </authorList>
    </citation>
    <scope>NUCLEOTIDE SEQUENCE [GENOMIC DNA]</scope>
    <source>
        <strain>15883</strain>
    </source>
</reference>
<name>ACPX_STRRM</name>
<feature type="chain" id="PRO_0000180253" description="Oxytetracycline polyketide synthase acyl carrier protein">
    <location>
        <begin position="1"/>
        <end position="95"/>
    </location>
</feature>
<feature type="domain" description="Carrier" evidence="1">
    <location>
        <begin position="3"/>
        <end position="81"/>
    </location>
</feature>
<feature type="modified residue" description="O-(pantetheine 4'-phosphoryl)serine" evidence="1">
    <location>
        <position position="41"/>
    </location>
</feature>
<feature type="helix" evidence="3">
    <location>
        <begin position="6"/>
        <end position="17"/>
    </location>
</feature>
<feature type="strand" evidence="3">
    <location>
        <begin position="30"/>
        <end position="32"/>
    </location>
</feature>
<feature type="helix" evidence="3">
    <location>
        <begin position="34"/>
        <end position="37"/>
    </location>
</feature>
<feature type="helix" evidence="3">
    <location>
        <begin position="42"/>
        <end position="54"/>
    </location>
</feature>
<feature type="helix" evidence="3">
    <location>
        <begin position="63"/>
        <end position="66"/>
    </location>
</feature>
<feature type="helix" evidence="3">
    <location>
        <begin position="70"/>
        <end position="83"/>
    </location>
</feature>
<comment type="function">
    <text>Acyl carrier protein.</text>
</comment>
<comment type="pathway">
    <text>Antibiotic biosynthesis; oxytetracycline biosynthesis.</text>
</comment>
<comment type="PTM">
    <text evidence="2">4'-phosphopantetheine is transferred from CoA to a specific serine of the apo-ACP-like protein.</text>
</comment>
<sequence length="95" mass="9916">MTLLTLSDLLTLLRECAGEEESIDLGGDVEDVAFDALGYDSLALLNTVGRIERDYGVQLGDDAVEKATTPRALIEMTNASLTGASPSAGGAARDK</sequence>
<keyword id="KW-0002">3D-structure</keyword>
<keyword id="KW-0045">Antibiotic biosynthesis</keyword>
<keyword id="KW-0596">Phosphopantetheine</keyword>
<keyword id="KW-0597">Phosphoprotein</keyword>
<evidence type="ECO:0000255" key="1">
    <source>
        <dbReference type="PROSITE-ProRule" id="PRU00258"/>
    </source>
</evidence>
<evidence type="ECO:0000305" key="2"/>
<evidence type="ECO:0007829" key="3">
    <source>
        <dbReference type="PDB" id="1NQ4"/>
    </source>
</evidence>
<accession>P43677</accession>
<dbReference type="EMBL" id="Z25538">
    <property type="protein sequence ID" value="CAA80986.1"/>
    <property type="molecule type" value="Genomic_DNA"/>
</dbReference>
<dbReference type="EMBL" id="U01666">
    <property type="protein sequence ID" value="AAA03334.1"/>
    <property type="molecule type" value="Genomic_DNA"/>
</dbReference>
<dbReference type="RefSeq" id="WP_003981021.1">
    <property type="nucleotide sequence ID" value="NZ_SADA01000149.1"/>
</dbReference>
<dbReference type="PDB" id="1NQ4">
    <property type="method" value="NMR"/>
    <property type="chains" value="A=1-95"/>
</dbReference>
<dbReference type="PDBsum" id="1NQ4"/>
<dbReference type="BMRB" id="P43677"/>
<dbReference type="SMR" id="P43677"/>
<dbReference type="GeneID" id="66859935"/>
<dbReference type="OMA" id="YDSVAMV"/>
<dbReference type="UniPathway" id="UPA00926"/>
<dbReference type="EvolutionaryTrace" id="P43677"/>
<dbReference type="GO" id="GO:0017000">
    <property type="term" value="P:antibiotic biosynthetic process"/>
    <property type="evidence" value="ECO:0007669"/>
    <property type="project" value="UniProtKB-KW"/>
</dbReference>
<dbReference type="Gene3D" id="1.10.1200.10">
    <property type="entry name" value="ACP-like"/>
    <property type="match status" value="1"/>
</dbReference>
<dbReference type="InterPro" id="IPR036736">
    <property type="entry name" value="ACP-like_sf"/>
</dbReference>
<dbReference type="InterPro" id="IPR009081">
    <property type="entry name" value="PP-bd_ACP"/>
</dbReference>
<dbReference type="InterPro" id="IPR006162">
    <property type="entry name" value="Ppantetheine_attach_site"/>
</dbReference>
<dbReference type="Pfam" id="PF00550">
    <property type="entry name" value="PP-binding"/>
    <property type="match status" value="1"/>
</dbReference>
<dbReference type="SUPFAM" id="SSF47336">
    <property type="entry name" value="ACP-like"/>
    <property type="match status" value="1"/>
</dbReference>
<dbReference type="PROSITE" id="PS50075">
    <property type="entry name" value="CARRIER"/>
    <property type="match status" value="1"/>
</dbReference>
<dbReference type="PROSITE" id="PS00012">
    <property type="entry name" value="PHOSPHOPANTETHEINE"/>
    <property type="match status" value="1"/>
</dbReference>
<organism>
    <name type="scientific">Streptomyces rimosus</name>
    <dbReference type="NCBI Taxonomy" id="1927"/>
    <lineage>
        <taxon>Bacteria</taxon>
        <taxon>Bacillati</taxon>
        <taxon>Actinomycetota</taxon>
        <taxon>Actinomycetes</taxon>
        <taxon>Kitasatosporales</taxon>
        <taxon>Streptomycetaceae</taxon>
        <taxon>Streptomyces</taxon>
    </lineage>
</organism>